<reference key="1">
    <citation type="submission" date="2006-09" db="EMBL/GenBank/DDBJ databases">
        <title>Complete sequence of Rhodopseudomonas palustris BisA53.</title>
        <authorList>
            <consortium name="US DOE Joint Genome Institute"/>
            <person name="Copeland A."/>
            <person name="Lucas S."/>
            <person name="Lapidus A."/>
            <person name="Barry K."/>
            <person name="Detter J.C."/>
            <person name="Glavina del Rio T."/>
            <person name="Hammon N."/>
            <person name="Israni S."/>
            <person name="Dalin E."/>
            <person name="Tice H."/>
            <person name="Pitluck S."/>
            <person name="Chain P."/>
            <person name="Malfatti S."/>
            <person name="Shin M."/>
            <person name="Vergez L."/>
            <person name="Schmutz J."/>
            <person name="Larimer F."/>
            <person name="Land M."/>
            <person name="Hauser L."/>
            <person name="Pelletier D.A."/>
            <person name="Kyrpides N."/>
            <person name="Kim E."/>
            <person name="Harwood C.S."/>
            <person name="Oda Y."/>
            <person name="Richardson P."/>
        </authorList>
    </citation>
    <scope>NUCLEOTIDE SEQUENCE [LARGE SCALE GENOMIC DNA]</scope>
    <source>
        <strain>BisA53</strain>
    </source>
</reference>
<accession>Q07V81</accession>
<name>RS15_RHOP5</name>
<keyword id="KW-0687">Ribonucleoprotein</keyword>
<keyword id="KW-0689">Ribosomal protein</keyword>
<keyword id="KW-0694">RNA-binding</keyword>
<keyword id="KW-0699">rRNA-binding</keyword>
<feature type="chain" id="PRO_1000054854" description="Small ribosomal subunit protein uS15">
    <location>
        <begin position="1"/>
        <end position="89"/>
    </location>
</feature>
<feature type="region of interest" description="Disordered" evidence="2">
    <location>
        <begin position="1"/>
        <end position="24"/>
    </location>
</feature>
<feature type="compositionally biased region" description="Basic and acidic residues" evidence="2">
    <location>
        <begin position="1"/>
        <end position="21"/>
    </location>
</feature>
<gene>
    <name evidence="1" type="primary">rpsO</name>
    <name type="ordered locus">RPE_0193</name>
</gene>
<dbReference type="EMBL" id="CP000463">
    <property type="protein sequence ID" value="ABJ04153.1"/>
    <property type="molecule type" value="Genomic_DNA"/>
</dbReference>
<dbReference type="SMR" id="Q07V81"/>
<dbReference type="STRING" id="316055.RPE_0193"/>
<dbReference type="KEGG" id="rpe:RPE_0193"/>
<dbReference type="eggNOG" id="COG0184">
    <property type="taxonomic scope" value="Bacteria"/>
</dbReference>
<dbReference type="HOGENOM" id="CLU_148518_0_0_5"/>
<dbReference type="OrthoDB" id="9799262at2"/>
<dbReference type="GO" id="GO:0022627">
    <property type="term" value="C:cytosolic small ribosomal subunit"/>
    <property type="evidence" value="ECO:0007669"/>
    <property type="project" value="TreeGrafter"/>
</dbReference>
<dbReference type="GO" id="GO:0019843">
    <property type="term" value="F:rRNA binding"/>
    <property type="evidence" value="ECO:0007669"/>
    <property type="project" value="UniProtKB-UniRule"/>
</dbReference>
<dbReference type="GO" id="GO:0003735">
    <property type="term" value="F:structural constituent of ribosome"/>
    <property type="evidence" value="ECO:0007669"/>
    <property type="project" value="InterPro"/>
</dbReference>
<dbReference type="GO" id="GO:0006412">
    <property type="term" value="P:translation"/>
    <property type="evidence" value="ECO:0007669"/>
    <property type="project" value="UniProtKB-UniRule"/>
</dbReference>
<dbReference type="CDD" id="cd00353">
    <property type="entry name" value="Ribosomal_S15p_S13e"/>
    <property type="match status" value="1"/>
</dbReference>
<dbReference type="FunFam" id="1.10.287.10:FF:000002">
    <property type="entry name" value="30S ribosomal protein S15"/>
    <property type="match status" value="1"/>
</dbReference>
<dbReference type="Gene3D" id="6.10.250.3130">
    <property type="match status" value="1"/>
</dbReference>
<dbReference type="Gene3D" id="1.10.287.10">
    <property type="entry name" value="S15/NS1, RNA-binding"/>
    <property type="match status" value="1"/>
</dbReference>
<dbReference type="HAMAP" id="MF_01343_B">
    <property type="entry name" value="Ribosomal_uS15_B"/>
    <property type="match status" value="1"/>
</dbReference>
<dbReference type="InterPro" id="IPR000589">
    <property type="entry name" value="Ribosomal_uS15"/>
</dbReference>
<dbReference type="InterPro" id="IPR005290">
    <property type="entry name" value="Ribosomal_uS15_bac-type"/>
</dbReference>
<dbReference type="InterPro" id="IPR009068">
    <property type="entry name" value="uS15_NS1_RNA-bd_sf"/>
</dbReference>
<dbReference type="NCBIfam" id="TIGR00952">
    <property type="entry name" value="S15_bact"/>
    <property type="match status" value="1"/>
</dbReference>
<dbReference type="PANTHER" id="PTHR23321">
    <property type="entry name" value="RIBOSOMAL PROTEIN S15, BACTERIAL AND ORGANELLAR"/>
    <property type="match status" value="1"/>
</dbReference>
<dbReference type="PANTHER" id="PTHR23321:SF26">
    <property type="entry name" value="SMALL RIBOSOMAL SUBUNIT PROTEIN US15M"/>
    <property type="match status" value="1"/>
</dbReference>
<dbReference type="Pfam" id="PF00312">
    <property type="entry name" value="Ribosomal_S15"/>
    <property type="match status" value="1"/>
</dbReference>
<dbReference type="SMART" id="SM01387">
    <property type="entry name" value="Ribosomal_S15"/>
    <property type="match status" value="1"/>
</dbReference>
<dbReference type="SUPFAM" id="SSF47060">
    <property type="entry name" value="S15/NS1 RNA-binding domain"/>
    <property type="match status" value="1"/>
</dbReference>
<dbReference type="PROSITE" id="PS00362">
    <property type="entry name" value="RIBOSOMAL_S15"/>
    <property type="match status" value="1"/>
</dbReference>
<comment type="function">
    <text evidence="1">One of the primary rRNA binding proteins, it binds directly to 16S rRNA where it helps nucleate assembly of the platform of the 30S subunit by binding and bridging several RNA helices of the 16S rRNA.</text>
</comment>
<comment type="function">
    <text evidence="1">Forms an intersubunit bridge (bridge B4) with the 23S rRNA of the 50S subunit in the ribosome.</text>
</comment>
<comment type="subunit">
    <text evidence="1">Part of the 30S ribosomal subunit. Forms a bridge to the 50S subunit in the 70S ribosome, contacting the 23S rRNA.</text>
</comment>
<comment type="similarity">
    <text evidence="1">Belongs to the universal ribosomal protein uS15 family.</text>
</comment>
<protein>
    <recommendedName>
        <fullName evidence="1">Small ribosomal subunit protein uS15</fullName>
    </recommendedName>
    <alternativeName>
        <fullName evidence="3">30S ribosomal protein S15</fullName>
    </alternativeName>
</protein>
<sequence length="89" mass="10221">MSIAAERKAEVIKTNARKDGDTGSPEVQVAILSERIANLTAHFKTHVKDNHSRRGLLKLVSTRRSLLDYVKKRDEARYKALLEKHNIRR</sequence>
<organism>
    <name type="scientific">Rhodopseudomonas palustris (strain BisA53)</name>
    <dbReference type="NCBI Taxonomy" id="316055"/>
    <lineage>
        <taxon>Bacteria</taxon>
        <taxon>Pseudomonadati</taxon>
        <taxon>Pseudomonadota</taxon>
        <taxon>Alphaproteobacteria</taxon>
        <taxon>Hyphomicrobiales</taxon>
        <taxon>Nitrobacteraceae</taxon>
        <taxon>Rhodopseudomonas</taxon>
    </lineage>
</organism>
<proteinExistence type="inferred from homology"/>
<evidence type="ECO:0000255" key="1">
    <source>
        <dbReference type="HAMAP-Rule" id="MF_01343"/>
    </source>
</evidence>
<evidence type="ECO:0000256" key="2">
    <source>
        <dbReference type="SAM" id="MobiDB-lite"/>
    </source>
</evidence>
<evidence type="ECO:0000305" key="3"/>